<feature type="chain" id="PRO_0000198947" description="GTP-binding protein RHO3">
    <location>
        <begin position="1"/>
        <end position="228"/>
    </location>
</feature>
<feature type="propeptide" id="PRO_0000281277" description="Removed in mature form" evidence="3">
    <location>
        <begin position="229"/>
        <end position="231"/>
    </location>
</feature>
<feature type="region of interest" description="Disordered" evidence="4">
    <location>
        <begin position="139"/>
        <end position="165"/>
    </location>
</feature>
<feature type="short sequence motif" description="Effector region">
    <location>
        <begin position="45"/>
        <end position="53"/>
    </location>
</feature>
<feature type="compositionally biased region" description="Polar residues" evidence="4">
    <location>
        <begin position="139"/>
        <end position="150"/>
    </location>
</feature>
<feature type="compositionally biased region" description="Low complexity" evidence="4">
    <location>
        <begin position="151"/>
        <end position="165"/>
    </location>
</feature>
<feature type="binding site" evidence="2">
    <location>
        <begin position="23"/>
        <end position="30"/>
    </location>
    <ligand>
        <name>GTP</name>
        <dbReference type="ChEBI" id="CHEBI:37565"/>
    </ligand>
</feature>
<feature type="binding site" evidence="1">
    <location>
        <begin position="70"/>
        <end position="74"/>
    </location>
    <ligand>
        <name>GTP</name>
        <dbReference type="ChEBI" id="CHEBI:37565"/>
    </ligand>
</feature>
<feature type="binding site" evidence="2">
    <location>
        <begin position="128"/>
        <end position="131"/>
    </location>
    <ligand>
        <name>GTP</name>
        <dbReference type="ChEBI" id="CHEBI:37565"/>
    </ligand>
</feature>
<feature type="modified residue" description="Cysteine methyl ester" evidence="3">
    <location>
        <position position="228"/>
    </location>
</feature>
<feature type="lipid moiety-binding region" description="S-farnesyl cysteine" evidence="3">
    <location>
        <position position="228"/>
    </location>
</feature>
<feature type="sequence conflict" description="In Ref. 1; BAA00897." evidence="11" ref="1">
    <original>K</original>
    <variation>E</variation>
    <location>
        <position position="129"/>
    </location>
</feature>
<evidence type="ECO:0000250" key="1">
    <source>
        <dbReference type="UniProtKB" id="P20171"/>
    </source>
</evidence>
<evidence type="ECO:0000250" key="2">
    <source>
        <dbReference type="UniProtKB" id="P61586"/>
    </source>
</evidence>
<evidence type="ECO:0000250" key="3">
    <source>
        <dbReference type="UniProtKB" id="P62745"/>
    </source>
</evidence>
<evidence type="ECO:0000256" key="4">
    <source>
        <dbReference type="SAM" id="MobiDB-lite"/>
    </source>
</evidence>
<evidence type="ECO:0000269" key="5">
    <source>
    </source>
</evidence>
<evidence type="ECO:0000269" key="6">
    <source>
    </source>
</evidence>
<evidence type="ECO:0000269" key="7">
    <source>
    </source>
</evidence>
<evidence type="ECO:0000269" key="8">
    <source>
    </source>
</evidence>
<evidence type="ECO:0000269" key="9">
    <source>
    </source>
</evidence>
<evidence type="ECO:0000303" key="10">
    <source>
    </source>
</evidence>
<evidence type="ECO:0000305" key="11"/>
<gene>
    <name evidence="10" type="primary">RHO3</name>
    <name type="ordered locus">YIL118W</name>
</gene>
<reference key="1">
    <citation type="journal article" date="1992" name="Gene">
        <title>Isolation and characterization of two novel ras superfamily genes in Saccharomyces cerevisiae.</title>
        <authorList>
            <person name="Matsui Y."/>
            <person name="Toh-E A."/>
        </authorList>
    </citation>
    <scope>NUCLEOTIDE SEQUENCE [GENOMIC DNA]</scope>
    <source>
        <strain>ATCC 38626 / AH22 / NRRL Y-12843</strain>
    </source>
</reference>
<reference key="2">
    <citation type="journal article" date="1997" name="Nature">
        <title>The nucleotide sequence of Saccharomyces cerevisiae chromosome IX.</title>
        <authorList>
            <person name="Churcher C.M."/>
            <person name="Bowman S."/>
            <person name="Badcock K."/>
            <person name="Bankier A.T."/>
            <person name="Brown D."/>
            <person name="Chillingworth T."/>
            <person name="Connor R."/>
            <person name="Devlin K."/>
            <person name="Gentles S."/>
            <person name="Hamlin N."/>
            <person name="Harris D.E."/>
            <person name="Horsnell T."/>
            <person name="Hunt S."/>
            <person name="Jagels K."/>
            <person name="Jones M."/>
            <person name="Lye G."/>
            <person name="Moule S."/>
            <person name="Odell C."/>
            <person name="Pearson D."/>
            <person name="Rajandream M.A."/>
            <person name="Rice P."/>
            <person name="Rowley N."/>
            <person name="Skelton J."/>
            <person name="Smith V."/>
            <person name="Walsh S.V."/>
            <person name="Whitehead S."/>
            <person name="Barrell B.G."/>
        </authorList>
    </citation>
    <scope>NUCLEOTIDE SEQUENCE [LARGE SCALE GENOMIC DNA]</scope>
    <source>
        <strain>ATCC 204508 / S288c</strain>
    </source>
</reference>
<reference key="3">
    <citation type="journal article" date="2014" name="G3 (Bethesda)">
        <title>The reference genome sequence of Saccharomyces cerevisiae: Then and now.</title>
        <authorList>
            <person name="Engel S.R."/>
            <person name="Dietrich F.S."/>
            <person name="Fisk D.G."/>
            <person name="Binkley G."/>
            <person name="Balakrishnan R."/>
            <person name="Costanzo M.C."/>
            <person name="Dwight S.S."/>
            <person name="Hitz B.C."/>
            <person name="Karra K."/>
            <person name="Nash R.S."/>
            <person name="Weng S."/>
            <person name="Wong E.D."/>
            <person name="Lloyd P."/>
            <person name="Skrzypek M.S."/>
            <person name="Miyasato S.R."/>
            <person name="Simison M."/>
            <person name="Cherry J.M."/>
        </authorList>
    </citation>
    <scope>GENOME REANNOTATION</scope>
    <source>
        <strain>ATCC 204508 / S288c</strain>
    </source>
</reference>
<reference key="4">
    <citation type="journal article" date="2007" name="Genome Res.">
        <title>Approaching a complete repository of sequence-verified protein-encoding clones for Saccharomyces cerevisiae.</title>
        <authorList>
            <person name="Hu Y."/>
            <person name="Rolfs A."/>
            <person name="Bhullar B."/>
            <person name="Murthy T.V.S."/>
            <person name="Zhu C."/>
            <person name="Berger M.F."/>
            <person name="Camargo A.A."/>
            <person name="Kelley F."/>
            <person name="McCarron S."/>
            <person name="Jepson D."/>
            <person name="Richardson A."/>
            <person name="Raphael J."/>
            <person name="Moreira D."/>
            <person name="Taycher E."/>
            <person name="Zuo D."/>
            <person name="Mohr S."/>
            <person name="Kane M.F."/>
            <person name="Williamson J."/>
            <person name="Simpson A.J.G."/>
            <person name="Bulyk M.L."/>
            <person name="Harlow E."/>
            <person name="Marsischky G."/>
            <person name="Kolodner R.D."/>
            <person name="LaBaer J."/>
        </authorList>
    </citation>
    <scope>NUCLEOTIDE SEQUENCE [GENOMIC DNA]</scope>
    <source>
        <strain>ATCC 204508 / S288c</strain>
    </source>
</reference>
<reference key="5">
    <citation type="journal article" date="1992" name="Mol. Cell. Biol.">
        <title>Yeast RHO3 and RHO4 ras superfamily genes are necessary for bud growth, and their defect is suppressed by a high dose of bud formation genes CDC42 and BEM1.</title>
        <authorList>
            <person name="Matsui Y."/>
            <person name="Toh-E A."/>
        </authorList>
    </citation>
    <scope>FUNCTION</scope>
</reference>
<reference key="6">
    <citation type="journal article" date="1996" name="Genetics">
        <title>Genetic analysis of the Saccharomyces cerevisiae RHO3 gene, encoding a rho-type small GTPase, provides evidence for a role in bud formation.</title>
        <authorList>
            <person name="Imai J."/>
            <person name="Toh-e A."/>
            <person name="Matsui Y."/>
        </authorList>
    </citation>
    <scope>FUNCTION</scope>
</reference>
<reference key="7">
    <citation type="journal article" date="1999" name="FEBS Lett.">
        <title>The yeast Rgd1p is a GTPase activating protein of the Rho3 and rho4 proteins.</title>
        <authorList>
            <person name="Doignon F."/>
            <person name="Weinachter C."/>
            <person name="Roumanie O."/>
            <person name="Crouzet M."/>
        </authorList>
    </citation>
    <scope>ACTIVITY REGULATION</scope>
</reference>
<reference key="8">
    <citation type="journal article" date="2003" name="Nature">
        <title>Global analysis of protein expression in yeast.</title>
        <authorList>
            <person name="Ghaemmaghami S."/>
            <person name="Huh W.-K."/>
            <person name="Bower K."/>
            <person name="Howson R.W."/>
            <person name="Belle A."/>
            <person name="Dephoure N."/>
            <person name="O'Shea E.K."/>
            <person name="Weissman J.S."/>
        </authorList>
    </citation>
    <scope>LEVEL OF PROTEIN EXPRESSION [LARGE SCALE ANALYSIS]</scope>
</reference>
<reference key="9">
    <citation type="journal article" date="2020" name="Fungal Genet. Biol.">
        <title>The Sur7/PalI family transmembrane protein Tos7 (Yol019w) plays a role in secretion in budding yeast.</title>
        <authorList>
            <person name="Zhu J."/>
            <person name="Jia Z.W."/>
            <person name="Xia C.Y."/>
            <person name="Gao X.D."/>
        </authorList>
    </citation>
    <scope>INTERACTION WITH TOS7</scope>
</reference>
<keyword id="KW-1003">Cell membrane</keyword>
<keyword id="KW-0342">GTP-binding</keyword>
<keyword id="KW-0449">Lipoprotein</keyword>
<keyword id="KW-0472">Membrane</keyword>
<keyword id="KW-0488">Methylation</keyword>
<keyword id="KW-0547">Nucleotide-binding</keyword>
<keyword id="KW-0636">Prenylation</keyword>
<keyword id="KW-1185">Reference proteome</keyword>
<proteinExistence type="evidence at protein level"/>
<name>RHO3_YEAST</name>
<accession>Q00245</accession>
<accession>D6VVG9</accession>
<protein>
    <recommendedName>
        <fullName evidence="10">GTP-binding protein RHO3</fullName>
    </recommendedName>
</protein>
<dbReference type="EMBL" id="D10006">
    <property type="protein sequence ID" value="BAA00897.1"/>
    <property type="molecule type" value="Genomic_DNA"/>
</dbReference>
<dbReference type="EMBL" id="Z46833">
    <property type="protein sequence ID" value="CAA86874.1"/>
    <property type="molecule type" value="Genomic_DNA"/>
</dbReference>
<dbReference type="EMBL" id="AY557857">
    <property type="protein sequence ID" value="AAS56183.1"/>
    <property type="molecule type" value="Genomic_DNA"/>
</dbReference>
<dbReference type="EMBL" id="BK006942">
    <property type="protein sequence ID" value="DAA08435.1"/>
    <property type="molecule type" value="Genomic_DNA"/>
</dbReference>
<dbReference type="PIR" id="S49891">
    <property type="entry name" value="S49891"/>
</dbReference>
<dbReference type="RefSeq" id="NP_012148.1">
    <property type="nucleotide sequence ID" value="NM_001179466.1"/>
</dbReference>
<dbReference type="SMR" id="Q00245"/>
<dbReference type="BioGRID" id="34873">
    <property type="interactions" value="252"/>
</dbReference>
<dbReference type="DIP" id="DIP-4820N"/>
<dbReference type="FunCoup" id="Q00245">
    <property type="interactions" value="226"/>
</dbReference>
<dbReference type="IntAct" id="Q00245">
    <property type="interactions" value="3"/>
</dbReference>
<dbReference type="MINT" id="Q00245"/>
<dbReference type="STRING" id="4932.YIL118W"/>
<dbReference type="iPTMnet" id="Q00245"/>
<dbReference type="SwissPalm" id="Q00245"/>
<dbReference type="PaxDb" id="4932-YIL118W"/>
<dbReference type="PeptideAtlas" id="Q00245"/>
<dbReference type="EnsemblFungi" id="YIL118W_mRNA">
    <property type="protein sequence ID" value="YIL118W"/>
    <property type="gene ID" value="YIL118W"/>
</dbReference>
<dbReference type="GeneID" id="854688"/>
<dbReference type="KEGG" id="sce:YIL118W"/>
<dbReference type="AGR" id="SGD:S000001380"/>
<dbReference type="SGD" id="S000001380">
    <property type="gene designation" value="RHO3"/>
</dbReference>
<dbReference type="VEuPathDB" id="FungiDB:YIL118W"/>
<dbReference type="eggNOG" id="KOG0393">
    <property type="taxonomic scope" value="Eukaryota"/>
</dbReference>
<dbReference type="HOGENOM" id="CLU_041217_21_2_1"/>
<dbReference type="InParanoid" id="Q00245"/>
<dbReference type="OMA" id="THTIMLC"/>
<dbReference type="OrthoDB" id="8830751at2759"/>
<dbReference type="BioCyc" id="YEAST:G3O-31371-MONOMER"/>
<dbReference type="Reactome" id="R-SCE-416482">
    <property type="pathway name" value="G alpha (12/13) signalling events"/>
</dbReference>
<dbReference type="Reactome" id="R-SCE-5625740">
    <property type="pathway name" value="RHO GTPases activate PKNs"/>
</dbReference>
<dbReference type="Reactome" id="R-SCE-6798695">
    <property type="pathway name" value="Neutrophil degranulation"/>
</dbReference>
<dbReference type="Reactome" id="R-SCE-9013026">
    <property type="pathway name" value="RHOB GTPase cycle"/>
</dbReference>
<dbReference type="Reactome" id="R-SCE-9013106">
    <property type="pathway name" value="RHOC GTPase cycle"/>
</dbReference>
<dbReference type="Reactome" id="R-SCE-9013405">
    <property type="pathway name" value="RHOD GTPase cycle"/>
</dbReference>
<dbReference type="Reactome" id="R-SCE-9035034">
    <property type="pathway name" value="RHOF GTPase cycle"/>
</dbReference>
<dbReference type="Reactome" id="R-SCE-9696264">
    <property type="pathway name" value="RND3 GTPase cycle"/>
</dbReference>
<dbReference type="Reactome" id="R-SCE-9696270">
    <property type="pathway name" value="RND2 GTPase cycle"/>
</dbReference>
<dbReference type="Reactome" id="R-SCE-9696273">
    <property type="pathway name" value="RND1 GTPase cycle"/>
</dbReference>
<dbReference type="BioGRID-ORCS" id="854688">
    <property type="hits" value="10 hits in 10 CRISPR screens"/>
</dbReference>
<dbReference type="PRO" id="PR:Q00245"/>
<dbReference type="Proteomes" id="UP000002311">
    <property type="component" value="Chromosome IX"/>
</dbReference>
<dbReference type="RNAct" id="Q00245">
    <property type="molecule type" value="protein"/>
</dbReference>
<dbReference type="GO" id="GO:0005933">
    <property type="term" value="C:cellular bud"/>
    <property type="evidence" value="ECO:0000314"/>
    <property type="project" value="SGD"/>
</dbReference>
<dbReference type="GO" id="GO:0005829">
    <property type="term" value="C:cytosol"/>
    <property type="evidence" value="ECO:0000314"/>
    <property type="project" value="SGD"/>
</dbReference>
<dbReference type="GO" id="GO:0005886">
    <property type="term" value="C:plasma membrane"/>
    <property type="evidence" value="ECO:0007005"/>
    <property type="project" value="SGD"/>
</dbReference>
<dbReference type="GO" id="GO:0005525">
    <property type="term" value="F:GTP binding"/>
    <property type="evidence" value="ECO:0000314"/>
    <property type="project" value="SGD"/>
</dbReference>
<dbReference type="GO" id="GO:0003924">
    <property type="term" value="F:GTPase activity"/>
    <property type="evidence" value="ECO:0000314"/>
    <property type="project" value="SGD"/>
</dbReference>
<dbReference type="GO" id="GO:0019901">
    <property type="term" value="F:protein kinase binding"/>
    <property type="evidence" value="ECO:0000318"/>
    <property type="project" value="GO_Central"/>
</dbReference>
<dbReference type="GO" id="GO:0007015">
    <property type="term" value="P:actin filament organization"/>
    <property type="evidence" value="ECO:0000318"/>
    <property type="project" value="GO_Central"/>
</dbReference>
<dbReference type="GO" id="GO:0030950">
    <property type="term" value="P:establishment or maintenance of actin cytoskeleton polarity"/>
    <property type="evidence" value="ECO:0000315"/>
    <property type="project" value="SGD"/>
</dbReference>
<dbReference type="GO" id="GO:0045921">
    <property type="term" value="P:positive regulation of exocytosis"/>
    <property type="evidence" value="ECO:0000315"/>
    <property type="project" value="SGD"/>
</dbReference>
<dbReference type="GO" id="GO:0090338">
    <property type="term" value="P:positive regulation of formin-nucleated actin cable assembly"/>
    <property type="evidence" value="ECO:0000315"/>
    <property type="project" value="SGD"/>
</dbReference>
<dbReference type="GO" id="GO:0032956">
    <property type="term" value="P:regulation of actin cytoskeleton organization"/>
    <property type="evidence" value="ECO:0000318"/>
    <property type="project" value="GO_Central"/>
</dbReference>
<dbReference type="GO" id="GO:0007165">
    <property type="term" value="P:signal transduction"/>
    <property type="evidence" value="ECO:0000318"/>
    <property type="project" value="GO_Central"/>
</dbReference>
<dbReference type="GO" id="GO:0007264">
    <property type="term" value="P:small GTPase-mediated signal transduction"/>
    <property type="evidence" value="ECO:0007669"/>
    <property type="project" value="InterPro"/>
</dbReference>
<dbReference type="CDD" id="cd04134">
    <property type="entry name" value="Rho3"/>
    <property type="match status" value="1"/>
</dbReference>
<dbReference type="FunFam" id="3.40.50.300:FF:000780">
    <property type="entry name" value="Rho GTPase Rho3"/>
    <property type="match status" value="1"/>
</dbReference>
<dbReference type="Gene3D" id="3.40.50.300">
    <property type="entry name" value="P-loop containing nucleotide triphosphate hydrolases"/>
    <property type="match status" value="1"/>
</dbReference>
<dbReference type="InterPro" id="IPR027417">
    <property type="entry name" value="P-loop_NTPase"/>
</dbReference>
<dbReference type="InterPro" id="IPR005225">
    <property type="entry name" value="Small_GTP-bd"/>
</dbReference>
<dbReference type="InterPro" id="IPR001806">
    <property type="entry name" value="Small_GTPase"/>
</dbReference>
<dbReference type="InterPro" id="IPR003578">
    <property type="entry name" value="Small_GTPase_Rho"/>
</dbReference>
<dbReference type="NCBIfam" id="TIGR00231">
    <property type="entry name" value="small_GTP"/>
    <property type="match status" value="1"/>
</dbReference>
<dbReference type="PANTHER" id="PTHR24072">
    <property type="entry name" value="RHO FAMILY GTPASE"/>
    <property type="match status" value="1"/>
</dbReference>
<dbReference type="Pfam" id="PF00071">
    <property type="entry name" value="Ras"/>
    <property type="match status" value="1"/>
</dbReference>
<dbReference type="PRINTS" id="PR00449">
    <property type="entry name" value="RASTRNSFRMNG"/>
</dbReference>
<dbReference type="SMART" id="SM00175">
    <property type="entry name" value="RAB"/>
    <property type="match status" value="1"/>
</dbReference>
<dbReference type="SMART" id="SM00176">
    <property type="entry name" value="RAN"/>
    <property type="match status" value="1"/>
</dbReference>
<dbReference type="SMART" id="SM00173">
    <property type="entry name" value="RAS"/>
    <property type="match status" value="1"/>
</dbReference>
<dbReference type="SMART" id="SM00174">
    <property type="entry name" value="RHO"/>
    <property type="match status" value="1"/>
</dbReference>
<dbReference type="SUPFAM" id="SSF52540">
    <property type="entry name" value="P-loop containing nucleoside triphosphate hydrolases"/>
    <property type="match status" value="1"/>
</dbReference>
<dbReference type="PROSITE" id="PS51420">
    <property type="entry name" value="RHO"/>
    <property type="match status" value="1"/>
</dbReference>
<organism>
    <name type="scientific">Saccharomyces cerevisiae (strain ATCC 204508 / S288c)</name>
    <name type="common">Baker's yeast</name>
    <dbReference type="NCBI Taxonomy" id="559292"/>
    <lineage>
        <taxon>Eukaryota</taxon>
        <taxon>Fungi</taxon>
        <taxon>Dikarya</taxon>
        <taxon>Ascomycota</taxon>
        <taxon>Saccharomycotina</taxon>
        <taxon>Saccharomycetes</taxon>
        <taxon>Saccharomycetales</taxon>
        <taxon>Saccharomycetaceae</taxon>
        <taxon>Saccharomyces</taxon>
    </lineage>
</organism>
<comment type="function">
    <text evidence="6 9">Plays an important role in cell growth (PubMed:1448099). Required to keep the uninucleated state (PubMed:1448099). Modulates morphogenesis during bud growth via directing organization of the actin cytoskeleton and the position of the secretory machinery for exocytosis (PubMed:1448099, PubMed:8852836).</text>
</comment>
<comment type="activity regulation">
    <text evidence="5">Activity is positively regulated by the GTPase activating protein (GAP) RGD1.</text>
</comment>
<comment type="subunit">
    <text evidence="8">Interacts with TOS7.</text>
</comment>
<comment type="interaction">
    <interactant intactId="EBI-15138">
        <id>Q00245</id>
    </interactant>
    <interactant intactId="EBI-6717">
        <id>P19658</id>
        <label>EXO70</label>
    </interactant>
    <organismsDiffer>false</organismsDiffer>
    <experiments>4</experiments>
</comment>
<comment type="subcellular location">
    <subcellularLocation>
        <location evidence="11">Cell membrane</location>
        <topology evidence="11">Lipid-anchor</topology>
        <orientation evidence="11">Cytoplasmic side</orientation>
    </subcellularLocation>
</comment>
<comment type="miscellaneous">
    <text evidence="7">Present with 5910 molecules/cell in log phase SD medium.</text>
</comment>
<comment type="similarity">
    <text evidence="11">Belongs to the small GTPase superfamily. Rho family.</text>
</comment>
<sequence>MSFLCGSASTSNKPIERKIVILGDGACGKTSLLNVFTRGYFPEVYEPTVFENYIHDIFVDSKHITLSLWDTAGQEEFDRLRSLSYSDTQCIMLCFSIDSRDSLENVQNKWVGEITDHCEGVKLVLVALKCDLRNNENESNAITPNNIQQDNSVSNDNGNNINSTSNGKNLISYEEGLAMAKKIGALRYLECSAKLNKGVNEAFTEAARVALTAGPVATEVKSDSGSSCTIM</sequence>